<keyword id="KW-0025">Alternative splicing</keyword>
<keyword id="KW-0106">Calcium</keyword>
<keyword id="KW-0256">Endoplasmic reticulum</keyword>
<keyword id="KW-0325">Glycoprotein</keyword>
<keyword id="KW-0333">Golgi apparatus</keyword>
<keyword id="KW-0378">Hydrolase</keyword>
<keyword id="KW-0472">Membrane</keyword>
<keyword id="KW-0479">Metal-binding</keyword>
<keyword id="KW-1185">Reference proteome</keyword>
<keyword id="KW-0735">Signal-anchor</keyword>
<keyword id="KW-0812">Transmembrane</keyword>
<keyword id="KW-1133">Transmembrane helix</keyword>
<reference key="1">
    <citation type="journal article" date="2005" name="Science">
        <title>The transcriptional landscape of the mammalian genome.</title>
        <authorList>
            <person name="Carninci P."/>
            <person name="Kasukawa T."/>
            <person name="Katayama S."/>
            <person name="Gough J."/>
            <person name="Frith M.C."/>
            <person name="Maeda N."/>
            <person name="Oyama R."/>
            <person name="Ravasi T."/>
            <person name="Lenhard B."/>
            <person name="Wells C."/>
            <person name="Kodzius R."/>
            <person name="Shimokawa K."/>
            <person name="Bajic V.B."/>
            <person name="Brenner S.E."/>
            <person name="Batalov S."/>
            <person name="Forrest A.R."/>
            <person name="Zavolan M."/>
            <person name="Davis M.J."/>
            <person name="Wilming L.G."/>
            <person name="Aidinis V."/>
            <person name="Allen J.E."/>
            <person name="Ambesi-Impiombato A."/>
            <person name="Apweiler R."/>
            <person name="Aturaliya R.N."/>
            <person name="Bailey T.L."/>
            <person name="Bansal M."/>
            <person name="Baxter L."/>
            <person name="Beisel K.W."/>
            <person name="Bersano T."/>
            <person name="Bono H."/>
            <person name="Chalk A.M."/>
            <person name="Chiu K.P."/>
            <person name="Choudhary V."/>
            <person name="Christoffels A."/>
            <person name="Clutterbuck D.R."/>
            <person name="Crowe M.L."/>
            <person name="Dalla E."/>
            <person name="Dalrymple B.P."/>
            <person name="de Bono B."/>
            <person name="Della Gatta G."/>
            <person name="di Bernardo D."/>
            <person name="Down T."/>
            <person name="Engstrom P."/>
            <person name="Fagiolini M."/>
            <person name="Faulkner G."/>
            <person name="Fletcher C.F."/>
            <person name="Fukushima T."/>
            <person name="Furuno M."/>
            <person name="Futaki S."/>
            <person name="Gariboldi M."/>
            <person name="Georgii-Hemming P."/>
            <person name="Gingeras T.R."/>
            <person name="Gojobori T."/>
            <person name="Green R.E."/>
            <person name="Gustincich S."/>
            <person name="Harbers M."/>
            <person name="Hayashi Y."/>
            <person name="Hensch T.K."/>
            <person name="Hirokawa N."/>
            <person name="Hill D."/>
            <person name="Huminiecki L."/>
            <person name="Iacono M."/>
            <person name="Ikeo K."/>
            <person name="Iwama A."/>
            <person name="Ishikawa T."/>
            <person name="Jakt M."/>
            <person name="Kanapin A."/>
            <person name="Katoh M."/>
            <person name="Kawasawa Y."/>
            <person name="Kelso J."/>
            <person name="Kitamura H."/>
            <person name="Kitano H."/>
            <person name="Kollias G."/>
            <person name="Krishnan S.P."/>
            <person name="Kruger A."/>
            <person name="Kummerfeld S.K."/>
            <person name="Kurochkin I.V."/>
            <person name="Lareau L.F."/>
            <person name="Lazarevic D."/>
            <person name="Lipovich L."/>
            <person name="Liu J."/>
            <person name="Liuni S."/>
            <person name="McWilliam S."/>
            <person name="Madan Babu M."/>
            <person name="Madera M."/>
            <person name="Marchionni L."/>
            <person name="Matsuda H."/>
            <person name="Matsuzawa S."/>
            <person name="Miki H."/>
            <person name="Mignone F."/>
            <person name="Miyake S."/>
            <person name="Morris K."/>
            <person name="Mottagui-Tabar S."/>
            <person name="Mulder N."/>
            <person name="Nakano N."/>
            <person name="Nakauchi H."/>
            <person name="Ng P."/>
            <person name="Nilsson R."/>
            <person name="Nishiguchi S."/>
            <person name="Nishikawa S."/>
            <person name="Nori F."/>
            <person name="Ohara O."/>
            <person name="Okazaki Y."/>
            <person name="Orlando V."/>
            <person name="Pang K.C."/>
            <person name="Pavan W.J."/>
            <person name="Pavesi G."/>
            <person name="Pesole G."/>
            <person name="Petrovsky N."/>
            <person name="Piazza S."/>
            <person name="Reed J."/>
            <person name="Reid J.F."/>
            <person name="Ring B.Z."/>
            <person name="Ringwald M."/>
            <person name="Rost B."/>
            <person name="Ruan Y."/>
            <person name="Salzberg S.L."/>
            <person name="Sandelin A."/>
            <person name="Schneider C."/>
            <person name="Schoenbach C."/>
            <person name="Sekiguchi K."/>
            <person name="Semple C.A."/>
            <person name="Seno S."/>
            <person name="Sessa L."/>
            <person name="Sheng Y."/>
            <person name="Shibata Y."/>
            <person name="Shimada H."/>
            <person name="Shimada K."/>
            <person name="Silva D."/>
            <person name="Sinclair B."/>
            <person name="Sperling S."/>
            <person name="Stupka E."/>
            <person name="Sugiura K."/>
            <person name="Sultana R."/>
            <person name="Takenaka Y."/>
            <person name="Taki K."/>
            <person name="Tammoja K."/>
            <person name="Tan S.L."/>
            <person name="Tang S."/>
            <person name="Taylor M.S."/>
            <person name="Tegner J."/>
            <person name="Teichmann S.A."/>
            <person name="Ueda H.R."/>
            <person name="van Nimwegen E."/>
            <person name="Verardo R."/>
            <person name="Wei C.L."/>
            <person name="Yagi K."/>
            <person name="Yamanishi H."/>
            <person name="Zabarovsky E."/>
            <person name="Zhu S."/>
            <person name="Zimmer A."/>
            <person name="Hide W."/>
            <person name="Bult C."/>
            <person name="Grimmond S.M."/>
            <person name="Teasdale R.D."/>
            <person name="Liu E.T."/>
            <person name="Brusic V."/>
            <person name="Quackenbush J."/>
            <person name="Wahlestedt C."/>
            <person name="Mattick J.S."/>
            <person name="Hume D.A."/>
            <person name="Kai C."/>
            <person name="Sasaki D."/>
            <person name="Tomaru Y."/>
            <person name="Fukuda S."/>
            <person name="Kanamori-Katayama M."/>
            <person name="Suzuki M."/>
            <person name="Aoki J."/>
            <person name="Arakawa T."/>
            <person name="Iida J."/>
            <person name="Imamura K."/>
            <person name="Itoh M."/>
            <person name="Kato T."/>
            <person name="Kawaji H."/>
            <person name="Kawagashira N."/>
            <person name="Kawashima T."/>
            <person name="Kojima M."/>
            <person name="Kondo S."/>
            <person name="Konno H."/>
            <person name="Nakano K."/>
            <person name="Ninomiya N."/>
            <person name="Nishio T."/>
            <person name="Okada M."/>
            <person name="Plessy C."/>
            <person name="Shibata K."/>
            <person name="Shiraki T."/>
            <person name="Suzuki S."/>
            <person name="Tagami M."/>
            <person name="Waki K."/>
            <person name="Watahiki A."/>
            <person name="Okamura-Oho Y."/>
            <person name="Suzuki H."/>
            <person name="Kawai J."/>
            <person name="Hayashizaki Y."/>
        </authorList>
    </citation>
    <scope>NUCLEOTIDE SEQUENCE [LARGE SCALE MRNA] (ISOFORMS 1; 2 AND 3)</scope>
    <source>
        <strain>C57BL/6J</strain>
        <tissue>Cerebellum</tissue>
        <tissue>Hippocampus</tissue>
        <tissue>Lung</tissue>
        <tissue>Testis</tissue>
        <tissue>Thymus</tissue>
    </source>
</reference>
<reference key="2">
    <citation type="journal article" date="2009" name="PLoS Biol.">
        <title>Lineage-specific biology revealed by a finished genome assembly of the mouse.</title>
        <authorList>
            <person name="Church D.M."/>
            <person name="Goodstadt L."/>
            <person name="Hillier L.W."/>
            <person name="Zody M.C."/>
            <person name="Goldstein S."/>
            <person name="She X."/>
            <person name="Bult C.J."/>
            <person name="Agarwala R."/>
            <person name="Cherry J.L."/>
            <person name="DiCuccio M."/>
            <person name="Hlavina W."/>
            <person name="Kapustin Y."/>
            <person name="Meric P."/>
            <person name="Maglott D."/>
            <person name="Birtle Z."/>
            <person name="Marques A.C."/>
            <person name="Graves T."/>
            <person name="Zhou S."/>
            <person name="Teague B."/>
            <person name="Potamousis K."/>
            <person name="Churas C."/>
            <person name="Place M."/>
            <person name="Herschleb J."/>
            <person name="Runnheim R."/>
            <person name="Forrest D."/>
            <person name="Amos-Landgraf J."/>
            <person name="Schwartz D.C."/>
            <person name="Cheng Z."/>
            <person name="Lindblad-Toh K."/>
            <person name="Eichler E.E."/>
            <person name="Ponting C.P."/>
        </authorList>
    </citation>
    <scope>NUCLEOTIDE SEQUENCE [LARGE SCALE GENOMIC DNA]</scope>
    <source>
        <strain>C57BL/6J</strain>
    </source>
</reference>
<reference key="3">
    <citation type="journal article" date="2004" name="Genome Res.">
        <title>The status, quality, and expansion of the NIH full-length cDNA project: the Mammalian Gene Collection (MGC).</title>
        <authorList>
            <consortium name="The MGC Project Team"/>
        </authorList>
    </citation>
    <scope>NUCLEOTIDE SEQUENCE [LARGE SCALE MRNA] (ISOFORM 1)</scope>
    <source>
        <strain>FVB/N</strain>
        <tissue>Colon</tissue>
    </source>
</reference>
<feature type="chain" id="PRO_0000209926" description="Soluble calcium-activated nucleotidase 1">
    <location>
        <begin position="1"/>
        <end position="403"/>
    </location>
</feature>
<feature type="topological domain" description="Cytoplasmic" evidence="4">
    <location>
        <begin position="1"/>
        <end position="44"/>
    </location>
</feature>
<feature type="transmembrane region" description="Helical; Signal-anchor for type II membrane protein" evidence="4">
    <location>
        <begin position="45"/>
        <end position="61"/>
    </location>
</feature>
<feature type="topological domain" description="Lumenal" evidence="4">
    <location>
        <begin position="62"/>
        <end position="403"/>
    </location>
</feature>
<feature type="binding site" evidence="3">
    <location>
        <position position="170"/>
    </location>
    <ligand>
        <name>Ca(2+)</name>
        <dbReference type="ChEBI" id="CHEBI:29108"/>
    </ligand>
</feature>
<feature type="binding site" evidence="3">
    <location>
        <position position="171"/>
    </location>
    <ligand>
        <name>Ca(2+)</name>
        <dbReference type="ChEBI" id="CHEBI:29108"/>
    </ligand>
</feature>
<feature type="binding site" evidence="3">
    <location>
        <position position="217"/>
    </location>
    <ligand>
        <name>Ca(2+)</name>
        <dbReference type="ChEBI" id="CHEBI:29108"/>
    </ligand>
</feature>
<feature type="binding site" evidence="3">
    <location>
        <position position="286"/>
    </location>
    <ligand>
        <name>Ca(2+)</name>
        <dbReference type="ChEBI" id="CHEBI:29108"/>
    </ligand>
</feature>
<feature type="binding site" evidence="3">
    <location>
        <position position="347"/>
    </location>
    <ligand>
        <name>Ca(2+)</name>
        <dbReference type="ChEBI" id="CHEBI:29108"/>
    </ligand>
</feature>
<feature type="binding site" evidence="3">
    <location>
        <position position="398"/>
    </location>
    <ligand>
        <name>Ca(2+)</name>
        <dbReference type="ChEBI" id="CHEBI:29108"/>
    </ligand>
</feature>
<feature type="site" description="Important for dimer formation" evidence="3">
    <location>
        <position position="162"/>
    </location>
</feature>
<feature type="site" description="Important for dimer formation" evidence="3">
    <location>
        <position position="202"/>
    </location>
</feature>
<feature type="site" description="Important for dimer formation" evidence="3">
    <location>
        <position position="204"/>
    </location>
</feature>
<feature type="site" description="Important for dimer formation" evidence="3">
    <location>
        <position position="258"/>
    </location>
</feature>
<feature type="glycosylation site" description="N-linked (GlcNAc...) asparagine" evidence="4">
    <location>
        <position position="90"/>
    </location>
</feature>
<feature type="splice variant" id="VSP_013762" description="In isoform 3." evidence="5">
    <original>G</original>
    <variation>GQLLLLSLALSPPSTRVCMLSSNDSWEQNLILASCVAG</variation>
    <location>
        <position position="213"/>
    </location>
</feature>
<feature type="splice variant" id="VSP_013763" description="In isoform 2." evidence="5">
    <original>F</original>
    <variation>K</variation>
    <location>
        <position position="214"/>
    </location>
</feature>
<feature type="splice variant" id="VSP_013764" description="In isoform 2." evidence="5">
    <location>
        <begin position="215"/>
        <end position="403"/>
    </location>
</feature>
<feature type="sequence conflict" description="In Ref. 1; BAC38139." evidence="6" ref="1">
    <original>Q</original>
    <variation>E</variation>
    <location>
        <position position="8"/>
    </location>
</feature>
<feature type="sequence conflict" description="In Ref. 1; BAC38139." evidence="6" ref="1">
    <original>A</original>
    <variation>G</variation>
    <location>
        <position position="113"/>
    </location>
</feature>
<comment type="function">
    <text evidence="3">Calcium-dependent nucleotidase with a preference for UDP. The order of activity with different substrates is UDP &gt; GDP &gt; IDP &gt;&gt; UTP &gt; CDP = GTP = ITP. Has very low activity towards ADP and even lower activity towards ATP. Does not hydrolyze AMP and GMP. Involved in proteoglycan synthesis.</text>
</comment>
<comment type="catalytic activity">
    <reaction evidence="3">
        <text>a ribonucleoside 5'-diphosphate + H2O = a ribonucleoside 5'-phosphate + phosphate + H(+)</text>
        <dbReference type="Rhea" id="RHEA:36799"/>
        <dbReference type="ChEBI" id="CHEBI:15377"/>
        <dbReference type="ChEBI" id="CHEBI:15378"/>
        <dbReference type="ChEBI" id="CHEBI:43474"/>
        <dbReference type="ChEBI" id="CHEBI:57930"/>
        <dbReference type="ChEBI" id="CHEBI:58043"/>
        <dbReference type="EC" id="3.6.1.6"/>
    </reaction>
</comment>
<comment type="cofactor">
    <cofactor evidence="3">
        <name>Ca(2+)</name>
        <dbReference type="ChEBI" id="CHEBI:29108"/>
    </cofactor>
</comment>
<comment type="subunit">
    <text evidence="3">Monomer. Homodimer; dimerization is Ca(2+)-dependent.</text>
</comment>
<comment type="subcellular location">
    <subcellularLocation>
        <location evidence="2">Endoplasmic reticulum membrane</location>
        <topology evidence="2">Single-pass type II membrane protein</topology>
    </subcellularLocation>
    <subcellularLocation>
        <location evidence="2">Golgi apparatus</location>
        <location evidence="2">Golgi stack membrane</location>
        <topology evidence="2">Single-pass type II membrane protein</topology>
    </subcellularLocation>
    <text evidence="1">Processed form: Secreted.</text>
</comment>
<comment type="alternative products">
    <event type="alternative splicing"/>
    <isoform>
        <id>Q8VCF1-1</id>
        <name>1</name>
        <sequence type="displayed"/>
    </isoform>
    <isoform>
        <id>Q8VCF1-2</id>
        <name>2</name>
        <sequence type="described" ref="VSP_013763 VSP_013764"/>
    </isoform>
    <isoform>
        <id>Q8VCF1-3</id>
        <name>3</name>
        <sequence type="described" ref="VSP_013762"/>
    </isoform>
</comment>
<comment type="similarity">
    <text evidence="6">Belongs to the apyrase family.</text>
</comment>
<comment type="sequence caution" evidence="6">
    <conflict type="frameshift">
        <sequence resource="EMBL-CDS" id="BAB31014"/>
    </conflict>
</comment>
<comment type="sequence caution" evidence="6">
    <conflict type="frameshift">
        <sequence resource="EMBL-CDS" id="BAC39351"/>
    </conflict>
</comment>
<proteinExistence type="evidence at transcript level"/>
<dbReference type="EC" id="3.6.1.6" evidence="3"/>
<dbReference type="EMBL" id="AK006565">
    <property type="protein sequence ID" value="BAB24655.1"/>
    <property type="molecule type" value="mRNA"/>
</dbReference>
<dbReference type="EMBL" id="AK017942">
    <property type="protein sequence ID" value="BAB31014.1"/>
    <property type="status" value="ALT_FRAME"/>
    <property type="molecule type" value="mRNA"/>
</dbReference>
<dbReference type="EMBL" id="AK049879">
    <property type="protein sequence ID" value="BAC33968.1"/>
    <property type="molecule type" value="mRNA"/>
</dbReference>
<dbReference type="EMBL" id="AK081118">
    <property type="protein sequence ID" value="BAC38139.1"/>
    <property type="molecule type" value="mRNA"/>
</dbReference>
<dbReference type="EMBL" id="AK085059">
    <property type="protein sequence ID" value="BAC39351.1"/>
    <property type="status" value="ALT_FRAME"/>
    <property type="molecule type" value="mRNA"/>
</dbReference>
<dbReference type="EMBL" id="AL591404">
    <property type="status" value="NOT_ANNOTATED_CDS"/>
    <property type="molecule type" value="Genomic_DNA"/>
</dbReference>
<dbReference type="EMBL" id="BC020003">
    <property type="protein sequence ID" value="AAH20003.1"/>
    <property type="molecule type" value="mRNA"/>
</dbReference>
<dbReference type="CCDS" id="CCDS25702.1">
    <molecule id="Q8VCF1-1"/>
</dbReference>
<dbReference type="CCDS" id="CCDS59572.1">
    <molecule id="Q8VCF1-3"/>
</dbReference>
<dbReference type="RefSeq" id="NP_001020788.1">
    <molecule id="Q8VCF1-1"/>
    <property type="nucleotide sequence ID" value="NM_001025617.2"/>
</dbReference>
<dbReference type="RefSeq" id="NP_001020789.1">
    <molecule id="Q8VCF1-1"/>
    <property type="nucleotide sequence ID" value="NM_001025618.2"/>
</dbReference>
<dbReference type="RefSeq" id="NP_001254520.1">
    <molecule id="Q8VCF1-1"/>
    <property type="nucleotide sequence ID" value="NM_001267591.1"/>
</dbReference>
<dbReference type="RefSeq" id="NP_001254521.1">
    <molecule id="Q8VCF1-3"/>
    <property type="nucleotide sequence ID" value="NM_001267592.1"/>
</dbReference>
<dbReference type="RefSeq" id="NP_083778.2">
    <molecule id="Q8VCF1-1"/>
    <property type="nucleotide sequence ID" value="NM_029502.3"/>
</dbReference>
<dbReference type="RefSeq" id="XP_006534467.1">
    <molecule id="Q8VCF1-3"/>
    <property type="nucleotide sequence ID" value="XM_006534404.4"/>
</dbReference>
<dbReference type="RefSeq" id="XP_006534468.1">
    <molecule id="Q8VCF1-3"/>
    <property type="nucleotide sequence ID" value="XM_006534405.4"/>
</dbReference>
<dbReference type="RefSeq" id="XP_006534469.1">
    <molecule id="Q8VCF1-3"/>
    <property type="nucleotide sequence ID" value="XM_006534406.4"/>
</dbReference>
<dbReference type="RefSeq" id="XP_006534470.1">
    <molecule id="Q8VCF1-3"/>
    <property type="nucleotide sequence ID" value="XM_006534407.4"/>
</dbReference>
<dbReference type="RefSeq" id="XP_006534471.1">
    <molecule id="Q8VCF1-3"/>
    <property type="nucleotide sequence ID" value="XM_006534408.5"/>
</dbReference>
<dbReference type="RefSeq" id="XP_006534472.1">
    <molecule id="Q8VCF1-3"/>
    <property type="nucleotide sequence ID" value="XM_006534409.2"/>
</dbReference>
<dbReference type="RefSeq" id="XP_006534473.1">
    <molecule id="Q8VCF1-3"/>
    <property type="nucleotide sequence ID" value="XM_006534410.5"/>
</dbReference>
<dbReference type="RefSeq" id="XP_030102267.1">
    <molecule id="Q8VCF1-1"/>
    <property type="nucleotide sequence ID" value="XM_030246407.2"/>
</dbReference>
<dbReference type="RefSeq" id="XP_030102268.1">
    <molecule id="Q8VCF1-1"/>
    <property type="nucleotide sequence ID" value="XM_030246408.2"/>
</dbReference>
<dbReference type="RefSeq" id="XP_030102269.1">
    <molecule id="Q8VCF1-1"/>
    <property type="nucleotide sequence ID" value="XM_030246409.2"/>
</dbReference>
<dbReference type="SMR" id="Q8VCF1"/>
<dbReference type="FunCoup" id="Q8VCF1">
    <property type="interactions" value="2039"/>
</dbReference>
<dbReference type="STRING" id="10090.ENSMUSP00000101896"/>
<dbReference type="GlyCosmos" id="Q8VCF1">
    <property type="glycosylation" value="1 site, No reported glycans"/>
</dbReference>
<dbReference type="GlyGen" id="Q8VCF1">
    <property type="glycosylation" value="1 site, 1 N-linked glycan (1 site)"/>
</dbReference>
<dbReference type="iPTMnet" id="Q8VCF1"/>
<dbReference type="PhosphoSitePlus" id="Q8VCF1"/>
<dbReference type="PaxDb" id="10090-ENSMUSP00000090032"/>
<dbReference type="PeptideAtlas" id="Q8VCF1"/>
<dbReference type="ProteomicsDB" id="265655">
    <molecule id="Q8VCF1-1"/>
</dbReference>
<dbReference type="ProteomicsDB" id="265656">
    <molecule id="Q8VCF1-2"/>
</dbReference>
<dbReference type="ProteomicsDB" id="265657">
    <molecule id="Q8VCF1-3"/>
</dbReference>
<dbReference type="Pumba" id="Q8VCF1"/>
<dbReference type="Antibodypedia" id="19748">
    <property type="antibodies" value="334 antibodies from 31 providers"/>
</dbReference>
<dbReference type="DNASU" id="76025"/>
<dbReference type="Ensembl" id="ENSMUST00000017620.10">
    <molecule id="Q8VCF1-1"/>
    <property type="protein sequence ID" value="ENSMUSP00000017620.4"/>
    <property type="gene ID" value="ENSMUSG00000025575.15"/>
</dbReference>
<dbReference type="Ensembl" id="ENSMUST00000092378.10">
    <molecule id="Q8VCF1-1"/>
    <property type="protein sequence ID" value="ENSMUSP00000090032.4"/>
    <property type="gene ID" value="ENSMUSG00000025575.15"/>
</dbReference>
<dbReference type="Ensembl" id="ENSMUST00000106287.8">
    <molecule id="Q8VCF1-1"/>
    <property type="protein sequence ID" value="ENSMUSP00000101894.2"/>
    <property type="gene ID" value="ENSMUSG00000025575.15"/>
</dbReference>
<dbReference type="Ensembl" id="ENSMUST00000106288.8">
    <molecule id="Q8VCF1-1"/>
    <property type="protein sequence ID" value="ENSMUSP00000101895.2"/>
    <property type="gene ID" value="ENSMUSG00000025575.15"/>
</dbReference>
<dbReference type="Ensembl" id="ENSMUST00000106289.9">
    <molecule id="Q8VCF1-3"/>
    <property type="protein sequence ID" value="ENSMUSP00000101896.3"/>
    <property type="gene ID" value="ENSMUSG00000025575.15"/>
</dbReference>
<dbReference type="Ensembl" id="ENSMUST00000164927.2">
    <molecule id="Q8VCF1-1"/>
    <property type="protein sequence ID" value="ENSMUSP00000126919.2"/>
    <property type="gene ID" value="ENSMUSG00000025575.15"/>
</dbReference>
<dbReference type="GeneID" id="76025"/>
<dbReference type="KEGG" id="mmu:76025"/>
<dbReference type="UCSC" id="uc007mpa.2">
    <molecule id="Q8VCF1-1"/>
    <property type="organism name" value="mouse"/>
</dbReference>
<dbReference type="UCSC" id="uc007mpf.2">
    <molecule id="Q8VCF1-2"/>
    <property type="organism name" value="mouse"/>
</dbReference>
<dbReference type="UCSC" id="uc011yin.2">
    <molecule id="Q8VCF1-3"/>
    <property type="organism name" value="mouse"/>
</dbReference>
<dbReference type="AGR" id="MGI:1923275"/>
<dbReference type="CTD" id="124583"/>
<dbReference type="MGI" id="MGI:1923275">
    <property type="gene designation" value="Cant1"/>
</dbReference>
<dbReference type="VEuPathDB" id="HostDB:ENSMUSG00000025575"/>
<dbReference type="eggNOG" id="KOG4494">
    <property type="taxonomic scope" value="Eukaryota"/>
</dbReference>
<dbReference type="GeneTree" id="ENSGT00390000012872"/>
<dbReference type="HOGENOM" id="CLU_047493_0_0_1"/>
<dbReference type="InParanoid" id="Q8VCF1"/>
<dbReference type="OMA" id="EDEHKGT"/>
<dbReference type="OrthoDB" id="5409at9989"/>
<dbReference type="TreeFam" id="TF315248"/>
<dbReference type="BRENDA" id="3.1.3.5">
    <property type="organism ID" value="3474"/>
</dbReference>
<dbReference type="BRENDA" id="3.6.1.6">
    <property type="organism ID" value="3474"/>
</dbReference>
<dbReference type="Reactome" id="R-MMU-6798695">
    <property type="pathway name" value="Neutrophil degranulation"/>
</dbReference>
<dbReference type="BioGRID-ORCS" id="76025">
    <property type="hits" value="3 hits in 79 CRISPR screens"/>
</dbReference>
<dbReference type="ChiTaRS" id="Cant1">
    <property type="organism name" value="mouse"/>
</dbReference>
<dbReference type="PRO" id="PR:Q8VCF1"/>
<dbReference type="Proteomes" id="UP000000589">
    <property type="component" value="Chromosome 11"/>
</dbReference>
<dbReference type="RNAct" id="Q8VCF1">
    <property type="molecule type" value="protein"/>
</dbReference>
<dbReference type="Bgee" id="ENSMUSG00000025575">
    <property type="expression patterns" value="Expressed in pyloric antrum and 264 other cell types or tissues"/>
</dbReference>
<dbReference type="GO" id="GO:0005783">
    <property type="term" value="C:endoplasmic reticulum"/>
    <property type="evidence" value="ECO:0000266"/>
    <property type="project" value="MGI"/>
</dbReference>
<dbReference type="GO" id="GO:0005789">
    <property type="term" value="C:endoplasmic reticulum membrane"/>
    <property type="evidence" value="ECO:0007669"/>
    <property type="project" value="UniProtKB-SubCell"/>
</dbReference>
<dbReference type="GO" id="GO:0032580">
    <property type="term" value="C:Golgi cisterna membrane"/>
    <property type="evidence" value="ECO:0007669"/>
    <property type="project" value="UniProtKB-SubCell"/>
</dbReference>
<dbReference type="GO" id="GO:0016020">
    <property type="term" value="C:membrane"/>
    <property type="evidence" value="ECO:0000266"/>
    <property type="project" value="MGI"/>
</dbReference>
<dbReference type="GO" id="GO:0043262">
    <property type="term" value="F:ADP phosphatase activity"/>
    <property type="evidence" value="ECO:0007669"/>
    <property type="project" value="Ensembl"/>
</dbReference>
<dbReference type="GO" id="GO:0005509">
    <property type="term" value="F:calcium ion binding"/>
    <property type="evidence" value="ECO:0007669"/>
    <property type="project" value="Ensembl"/>
</dbReference>
<dbReference type="GO" id="GO:0004382">
    <property type="term" value="F:GDP phosphatase activity"/>
    <property type="evidence" value="ECO:0000266"/>
    <property type="project" value="MGI"/>
</dbReference>
<dbReference type="GO" id="GO:0042803">
    <property type="term" value="F:protein homodimerization activity"/>
    <property type="evidence" value="ECO:0007669"/>
    <property type="project" value="Ensembl"/>
</dbReference>
<dbReference type="GO" id="GO:0045134">
    <property type="term" value="F:UDP phosphatase activity"/>
    <property type="evidence" value="ECO:0000266"/>
    <property type="project" value="MGI"/>
</dbReference>
<dbReference type="GO" id="GO:0030166">
    <property type="term" value="P:proteoglycan biosynthetic process"/>
    <property type="evidence" value="ECO:0000250"/>
    <property type="project" value="UniProtKB"/>
</dbReference>
<dbReference type="GO" id="GO:0009191">
    <property type="term" value="P:ribonucleoside diphosphate catabolic process"/>
    <property type="evidence" value="ECO:0000305"/>
    <property type="project" value="MGI"/>
</dbReference>
<dbReference type="FunFam" id="2.120.10.100:FF:000001">
    <property type="entry name" value="Soluble calcium-activated nucleotidase 1"/>
    <property type="match status" value="1"/>
</dbReference>
<dbReference type="Gene3D" id="2.120.10.100">
    <property type="entry name" value="Apyrase"/>
    <property type="match status" value="1"/>
</dbReference>
<dbReference type="InterPro" id="IPR009283">
    <property type="entry name" value="Apyrase"/>
</dbReference>
<dbReference type="InterPro" id="IPR036258">
    <property type="entry name" value="Apyrase_sf"/>
</dbReference>
<dbReference type="PANTHER" id="PTHR13023">
    <property type="entry name" value="APYRASE"/>
    <property type="match status" value="1"/>
</dbReference>
<dbReference type="PANTHER" id="PTHR13023:SF3">
    <property type="entry name" value="SOLUBLE CALCIUM-ACTIVATED NUCLEOTIDASE 1"/>
    <property type="match status" value="1"/>
</dbReference>
<dbReference type="Pfam" id="PF06079">
    <property type="entry name" value="Apyrase"/>
    <property type="match status" value="1"/>
</dbReference>
<dbReference type="SUPFAM" id="SSF101887">
    <property type="entry name" value="Apyrase"/>
    <property type="match status" value="1"/>
</dbReference>
<evidence type="ECO:0000250" key="1"/>
<evidence type="ECO:0000250" key="2">
    <source>
        <dbReference type="UniProtKB" id="Q8K4Y7"/>
    </source>
</evidence>
<evidence type="ECO:0000250" key="3">
    <source>
        <dbReference type="UniProtKB" id="Q8WVQ1"/>
    </source>
</evidence>
<evidence type="ECO:0000255" key="4"/>
<evidence type="ECO:0000303" key="5">
    <source>
    </source>
</evidence>
<evidence type="ECO:0000305" key="6"/>
<accession>Q8VCF1</accession>
<accession>B1AQJ8</accession>
<accession>Q8C3R8</accession>
<accession>Q8C4T6</accession>
<accession>Q9D3F2</accession>
<accession>Q9D9R1</accession>
<gene>
    <name type="primary">Cant1</name>
</gene>
<organism>
    <name type="scientific">Mus musculus</name>
    <name type="common">Mouse</name>
    <dbReference type="NCBI Taxonomy" id="10090"/>
    <lineage>
        <taxon>Eukaryota</taxon>
        <taxon>Metazoa</taxon>
        <taxon>Chordata</taxon>
        <taxon>Craniata</taxon>
        <taxon>Vertebrata</taxon>
        <taxon>Euteleostomi</taxon>
        <taxon>Mammalia</taxon>
        <taxon>Eutheria</taxon>
        <taxon>Euarchontoglires</taxon>
        <taxon>Glires</taxon>
        <taxon>Rodentia</taxon>
        <taxon>Myomorpha</taxon>
        <taxon>Muroidea</taxon>
        <taxon>Muridae</taxon>
        <taxon>Murinae</taxon>
        <taxon>Mus</taxon>
        <taxon>Mus</taxon>
    </lineage>
</organism>
<name>CANT1_MOUSE</name>
<protein>
    <recommendedName>
        <fullName>Soluble calcium-activated nucleotidase 1</fullName>
        <shortName>SCAN-1</shortName>
        <ecNumber evidence="3">3.6.1.6</ecNumber>
    </recommendedName>
    <alternativeName>
        <fullName>Apyrase homolog</fullName>
    </alternativeName>
</protein>
<sequence length="403" mass="45653">MPIQPFDQREWNEPMHSLRISVGGLPVLASMTKATDPRFRPRWRVILTSFVGAALLWLLYSHHQGPVPGRPPTHNAHNWRLSQQRISHYNDTYPLSPPQRTPGGIRYRIAVIADLDTGSRAQEENTWFSYLKKGYLTLSDSGDRVSVEWDKDHGVLESHLAEKGRGMELSDLIVFNGKLYSVDDRTGVIYQIEGTKAVPWVILSDGDGTVEKGFKAEWLAVKDEHLYVGGLGKEWTTTTGEVMNENPEWVKVVGHRGSVDHENWVSSYNALRAAAGIRPPGYLIHESACWSDTLQRWFFLPRRASHERYSEKDDERKGSNLLLSAAQDFRDISVRQVGTLIPTHGFSSFKFIPNTDDQIIVALKSEEDNGRIATYVMAFTLDGRFLLPETKIGTVKYEGIEFI</sequence>